<reference key="1">
    <citation type="journal article" date="2006" name="Proc. Natl. Acad. Sci. U.S.A.">
        <title>Identification of genes subject to positive selection in uropathogenic strains of Escherichia coli: a comparative genomics approach.</title>
        <authorList>
            <person name="Chen S.L."/>
            <person name="Hung C.-S."/>
            <person name="Xu J."/>
            <person name="Reigstad C.S."/>
            <person name="Magrini V."/>
            <person name="Sabo A."/>
            <person name="Blasiar D."/>
            <person name="Bieri T."/>
            <person name="Meyer R.R."/>
            <person name="Ozersky P."/>
            <person name="Armstrong J.R."/>
            <person name="Fulton R.S."/>
            <person name="Latreille J.P."/>
            <person name="Spieth J."/>
            <person name="Hooton T.M."/>
            <person name="Mardis E.R."/>
            <person name="Hultgren S.J."/>
            <person name="Gordon J.I."/>
        </authorList>
    </citation>
    <scope>NUCLEOTIDE SEQUENCE [LARGE SCALE GENOMIC DNA]</scope>
    <source>
        <strain>UTI89 / UPEC</strain>
    </source>
</reference>
<dbReference type="EMBL" id="CP000243">
    <property type="protein sequence ID" value="ABE05616.1"/>
    <property type="status" value="ALT_INIT"/>
    <property type="molecule type" value="Genomic_DNA"/>
</dbReference>
<dbReference type="RefSeq" id="WP_000014320.1">
    <property type="nucleotide sequence ID" value="NZ_CP064825.1"/>
</dbReference>
<dbReference type="SMR" id="Q1RG98"/>
<dbReference type="GeneID" id="75169997"/>
<dbReference type="KEGG" id="eci:UTI89_C0106"/>
<dbReference type="HOGENOM" id="CLU_108853_0_0_6"/>
<dbReference type="Proteomes" id="UP000001952">
    <property type="component" value="Chromosome"/>
</dbReference>
<dbReference type="GO" id="GO:0005829">
    <property type="term" value="C:cytosol"/>
    <property type="evidence" value="ECO:0007669"/>
    <property type="project" value="UniProtKB-SubCell"/>
</dbReference>
<dbReference type="GO" id="GO:0042597">
    <property type="term" value="C:periplasmic space"/>
    <property type="evidence" value="ECO:0007669"/>
    <property type="project" value="UniProtKB-SubCell"/>
</dbReference>
<dbReference type="GO" id="GO:0045182">
    <property type="term" value="F:translation regulator activity"/>
    <property type="evidence" value="ECO:0007669"/>
    <property type="project" value="InterPro"/>
</dbReference>
<dbReference type="HAMAP" id="MF_01332">
    <property type="entry name" value="SecM"/>
    <property type="match status" value="1"/>
</dbReference>
<dbReference type="InterPro" id="IPR009502">
    <property type="entry name" value="SecM"/>
</dbReference>
<dbReference type="NCBIfam" id="NF002799">
    <property type="entry name" value="PRK02943.1-1"/>
    <property type="match status" value="1"/>
</dbReference>
<dbReference type="Pfam" id="PF06558">
    <property type="entry name" value="SecM"/>
    <property type="match status" value="1"/>
</dbReference>
<dbReference type="PIRSF" id="PIRSF004572">
    <property type="entry name" value="SecM"/>
    <property type="match status" value="1"/>
</dbReference>
<protein>
    <recommendedName>
        <fullName evidence="1">Secretion monitor</fullName>
    </recommendedName>
</protein>
<proteinExistence type="inferred from homology"/>
<gene>
    <name evidence="1" type="primary">secM</name>
    <name type="ordered locus">UTI89_C0106</name>
</gene>
<accession>Q1RG98</accession>
<keyword id="KW-0963">Cytoplasm</keyword>
<keyword id="KW-0574">Periplasm</keyword>
<keyword id="KW-0732">Signal</keyword>
<name>SECM_ECOUT</name>
<evidence type="ECO:0000255" key="1">
    <source>
        <dbReference type="HAMAP-Rule" id="MF_01332"/>
    </source>
</evidence>
<evidence type="ECO:0000305" key="2"/>
<comment type="function">
    <text evidence="1">Regulates secA expression by translational coupling of the secM secA operon. Translational pausing at a specific Pro residue 5 residues before the end of the protein may allow disruption of a mRNA repressor helix that normally suppresses secA translation initiation.</text>
</comment>
<comment type="subcellular location">
    <subcellularLocation>
        <location evidence="1">Cytoplasm</location>
        <location evidence="1">Cytosol</location>
    </subcellularLocation>
    <subcellularLocation>
        <location evidence="1">Periplasm</location>
    </subcellularLocation>
    <text evidence="1">The active form is cytosolic, while the periplasmic form is rapidly degraded, mainly by the tail-specific protease.</text>
</comment>
<comment type="similarity">
    <text evidence="1">Belongs to the SecM family.</text>
</comment>
<comment type="sequence caution" evidence="2">
    <conflict type="erroneous initiation">
        <sequence resource="EMBL-CDS" id="ABE05616"/>
    </conflict>
</comment>
<sequence>MSGILTRWRQFGKRYFWPHLLLGMVAASLGLPALSNAAEPNAPAKATTRNHEPSAKVNFGQLALLEANTRRPNSNYSVDYWHQHAIRTVIRHLSFAMAPQTLPVAEESLPLQAQHLALLDTLSALLTQEGTPSEKGYRIDYAHFTPQAKFSTPVWISQAQGIRAGPQRLS</sequence>
<feature type="signal peptide" evidence="1">
    <location>
        <begin position="1"/>
        <end position="37"/>
    </location>
</feature>
<feature type="chain" id="PRO_0000314444" description="Secretion monitor">
    <location>
        <begin position="38"/>
        <end position="170"/>
    </location>
</feature>
<organism>
    <name type="scientific">Escherichia coli (strain UTI89 / UPEC)</name>
    <dbReference type="NCBI Taxonomy" id="364106"/>
    <lineage>
        <taxon>Bacteria</taxon>
        <taxon>Pseudomonadati</taxon>
        <taxon>Pseudomonadota</taxon>
        <taxon>Gammaproteobacteria</taxon>
        <taxon>Enterobacterales</taxon>
        <taxon>Enterobacteriaceae</taxon>
        <taxon>Escherichia</taxon>
    </lineage>
</organism>